<comment type="function">
    <text>Putative adhesion molecule that mediates sialic-acid dependent binding to cells. The sialic acid recognition site may be masked by cis interactions with sialic acids on the same cell surface. In the immune response, may act as an inhibitory receptor upon ligand induced tyrosine phosphorylation by recruiting cytoplasmic phosphatase(s) via their SH2 domain(s) that block signal transduction through dephosphorylation of signaling molecules.</text>
</comment>
<comment type="subunit">
    <text evidence="4 5">Homodimer; disulfide-linked. Interacts with PTPN6/SHP-1 and PTPN11/SHP-2 upon phosphorylation.</text>
</comment>
<comment type="interaction">
    <interactant intactId="EBI-16826475">
        <id>Q91Y57</id>
    </interactant>
    <interactant intactId="EBI-1534575">
        <id>Q9QUK6</id>
        <label>Tlr4</label>
    </interactant>
    <organismsDiffer>false</organismsDiffer>
    <experiments>3</experiments>
</comment>
<comment type="subcellular location">
    <subcellularLocation>
        <location>Membrane</location>
        <topology>Single-pass type I membrane protein</topology>
    </subcellularLocation>
</comment>
<comment type="tissue specificity">
    <text>Expressed by monocytic/myeloid lineage cells. Found at higher levels in spleen, liver and heart. Found at lower levels in kidney and lung.</text>
</comment>
<comment type="domain">
    <text>Contains 1 copy of a cytoplasmic motif that is referred to as the immunoreceptor tyrosine-based inhibitor motif (ITIM). This motif is involved in modulation of cellular responses. The phosphorylated ITIM motif can bind the SH2 domain of several SH2-containing phosphatases.</text>
</comment>
<comment type="PTM">
    <text evidence="4 5">Phosphorylation of Tyr-432 is required for binding to PTPN6 and PTPN11. Phosphorylation of Tyr-455 is involved in binding to PTPN6. Tyr-432 needs to be phosphorylated prior to Tyr-455.</text>
</comment>
<comment type="similarity">
    <text evidence="6">Belongs to the immunoglobulin superfamily. SIGLEC (sialic acid binding Ig-like lectin) family.</text>
</comment>
<comment type="online information" name="Functional Glycomics Gateway - Glycan Binding">
    <link uri="http://www.functionalglycomics.org/glycomics/GBPServlet?&amp;operationType=view&amp;cbpId=cbp_mou_Itlect_197"/>
    <text>Siglec-E</text>
</comment>
<keyword id="KW-0130">Cell adhesion</keyword>
<keyword id="KW-1015">Disulfide bond</keyword>
<keyword id="KW-0325">Glycoprotein</keyword>
<keyword id="KW-0393">Immunoglobulin domain</keyword>
<keyword id="KW-0430">Lectin</keyword>
<keyword id="KW-0472">Membrane</keyword>
<keyword id="KW-0597">Phosphoprotein</keyword>
<keyword id="KW-1185">Reference proteome</keyword>
<keyword id="KW-0677">Repeat</keyword>
<keyword id="KW-0732">Signal</keyword>
<keyword id="KW-0812">Transmembrane</keyword>
<keyword id="KW-1133">Transmembrane helix</keyword>
<organism>
    <name type="scientific">Mus musculus</name>
    <name type="common">Mouse</name>
    <dbReference type="NCBI Taxonomy" id="10090"/>
    <lineage>
        <taxon>Eukaryota</taxon>
        <taxon>Metazoa</taxon>
        <taxon>Chordata</taxon>
        <taxon>Craniata</taxon>
        <taxon>Vertebrata</taxon>
        <taxon>Euteleostomi</taxon>
        <taxon>Mammalia</taxon>
        <taxon>Eutheria</taxon>
        <taxon>Euarchontoglires</taxon>
        <taxon>Glires</taxon>
        <taxon>Rodentia</taxon>
        <taxon>Myomorpha</taxon>
        <taxon>Muroidea</taxon>
        <taxon>Muridae</taxon>
        <taxon>Murinae</taxon>
        <taxon>Mus</taxon>
        <taxon>Mus</taxon>
    </lineage>
</organism>
<sequence length="467" mass="51901">MLLLLLLLLLWGIKGVEGQNPQEVFTLNVERKVVVQEGLCVLVPCNFSYLKKRLTDWTDSDPVHGFWYREGTDRRKDSIVATNNPIRKAVKETRNRFFLLGDPWRNDCSLNIREIRKKDAGLYFFRLERGKTKYNYMWDKMTLVVTALTNTPQILLPETLEAGHPSNLTCSVPWDCGWTAPPIFSWTGTSVSFLSTNTTGSSVLTITPQPQDHGTNLTCQVTLPGTNVSTRMTIRLNVSYAPKNLTVTIYQGADSVSTILKNGSSLPISEGQSLRLICSTDSYPPANLSWSWDNLTLCPSKLSKPGLLELFPVHLKHGGVYTCQAQHALGSQHISLSLSPQSSATLSEMMMGTFVGSGVTALLFLSVCILLLAVRSYRRKPARPAVVAPHPDALKVSVSQNPLVESQADDSSEPLPSILEAAPSSTEEEIHYATLSFHEMKPMNLWGQQDTTTEYSEIKFPQRTAWP</sequence>
<protein>
    <recommendedName>
        <fullName>Sialic acid-binding Ig-like lectin 12</fullName>
        <shortName>Siglec-12</shortName>
    </recommendedName>
    <alternativeName>
        <fullName>Myeloid inhibitory siglec</fullName>
        <shortName>MIS</shortName>
    </alternativeName>
    <alternativeName>
        <fullName>Sialic acid-binding Ig-like lectin 5</fullName>
        <shortName>Siglec-5</shortName>
    </alternativeName>
    <alternativeName>
        <fullName>Sialic acid-binding Ig-like lectin E</fullName>
        <shortName>Siglec-E</shortName>
        <shortName>mSiglec-E</shortName>
    </alternativeName>
    <alternativeName>
        <fullName>Sialic acid-binding Ig-like lectin-like 1</fullName>
        <shortName>Siglec-L1</shortName>
    </alternativeName>
</protein>
<dbReference type="EMBL" id="AF317298">
    <property type="protein sequence ID" value="AAG38598.1"/>
    <property type="molecule type" value="mRNA"/>
</dbReference>
<dbReference type="EMBL" id="AF329269">
    <property type="protein sequence ID" value="AAK49917.1"/>
    <property type="molecule type" value="mRNA"/>
</dbReference>
<dbReference type="EMBL" id="AC151989">
    <property type="status" value="NOT_ANNOTATED_CDS"/>
    <property type="molecule type" value="Genomic_DNA"/>
</dbReference>
<dbReference type="CCDS" id="CCDS21178.1"/>
<dbReference type="RefSeq" id="NP_112458.2">
    <property type="nucleotide sequence ID" value="NM_031181.2"/>
</dbReference>
<dbReference type="SMR" id="Q91Y57"/>
<dbReference type="BioGRID" id="219910">
    <property type="interactions" value="5"/>
</dbReference>
<dbReference type="ELM" id="Q91Y57"/>
<dbReference type="FunCoup" id="Q91Y57">
    <property type="interactions" value="731"/>
</dbReference>
<dbReference type="IntAct" id="Q91Y57">
    <property type="interactions" value="1"/>
</dbReference>
<dbReference type="STRING" id="10090.ENSMUSP00000032667"/>
<dbReference type="GlyCosmos" id="Q91Y57">
    <property type="glycosylation" value="10 sites, No reported glycans"/>
</dbReference>
<dbReference type="GlyGen" id="Q91Y57">
    <property type="glycosylation" value="11 sites, 3 N-linked glycans (3 sites)"/>
</dbReference>
<dbReference type="iPTMnet" id="Q91Y57"/>
<dbReference type="PhosphoSitePlus" id="Q91Y57"/>
<dbReference type="SwissPalm" id="Q91Y57"/>
<dbReference type="PaxDb" id="10090-ENSMUSP00000032667"/>
<dbReference type="ProteomicsDB" id="261040"/>
<dbReference type="DNASU" id="83382"/>
<dbReference type="Ensembl" id="ENSMUST00000032667.10">
    <property type="protein sequence ID" value="ENSMUSP00000032667.9"/>
    <property type="gene ID" value="ENSMUSG00000030474.10"/>
</dbReference>
<dbReference type="GeneID" id="83382"/>
<dbReference type="KEGG" id="mmu:83382"/>
<dbReference type="UCSC" id="uc009gng.1">
    <property type="organism name" value="mouse"/>
</dbReference>
<dbReference type="AGR" id="MGI:1932475"/>
<dbReference type="CTD" id="83382"/>
<dbReference type="MGI" id="MGI:1932475">
    <property type="gene designation" value="Siglece"/>
</dbReference>
<dbReference type="VEuPathDB" id="HostDB:ENSMUSG00000030474"/>
<dbReference type="eggNOG" id="ENOG502S41V">
    <property type="taxonomic scope" value="Eukaryota"/>
</dbReference>
<dbReference type="GeneTree" id="ENSGT01080000257333"/>
<dbReference type="HOGENOM" id="CLU_024444_6_1_1"/>
<dbReference type="InParanoid" id="Q91Y57"/>
<dbReference type="OMA" id="RMPPMIS"/>
<dbReference type="OrthoDB" id="10012075at2759"/>
<dbReference type="PhylomeDB" id="Q91Y57"/>
<dbReference type="TreeFam" id="TF332441"/>
<dbReference type="Reactome" id="R-MMU-198933">
    <property type="pathway name" value="Immunoregulatory interactions between a Lymphoid and a non-Lymphoid cell"/>
</dbReference>
<dbReference type="Reactome" id="R-MMU-6798695">
    <property type="pathway name" value="Neutrophil degranulation"/>
</dbReference>
<dbReference type="BioGRID-ORCS" id="83382">
    <property type="hits" value="3 hits in 80 CRISPR screens"/>
</dbReference>
<dbReference type="ChiTaRS" id="Siglece">
    <property type="organism name" value="mouse"/>
</dbReference>
<dbReference type="PRO" id="PR:Q91Y57"/>
<dbReference type="Proteomes" id="UP000000589">
    <property type="component" value="Chromosome 7"/>
</dbReference>
<dbReference type="RNAct" id="Q91Y57">
    <property type="molecule type" value="protein"/>
</dbReference>
<dbReference type="Bgee" id="ENSMUSG00000030474">
    <property type="expression patterns" value="Expressed in granulocyte and 53 other cell types or tissues"/>
</dbReference>
<dbReference type="ExpressionAtlas" id="Q91Y57">
    <property type="expression patterns" value="baseline and differential"/>
</dbReference>
<dbReference type="GO" id="GO:0009897">
    <property type="term" value="C:external side of plasma membrane"/>
    <property type="evidence" value="ECO:0000314"/>
    <property type="project" value="MGI"/>
</dbReference>
<dbReference type="GO" id="GO:0016020">
    <property type="term" value="C:membrane"/>
    <property type="evidence" value="ECO:0000250"/>
    <property type="project" value="MGI"/>
</dbReference>
<dbReference type="GO" id="GO:0048029">
    <property type="term" value="F:monosaccharide binding"/>
    <property type="evidence" value="ECO:0000314"/>
    <property type="project" value="MGI"/>
</dbReference>
<dbReference type="GO" id="GO:0033691">
    <property type="term" value="F:sialic acid binding"/>
    <property type="evidence" value="ECO:0000314"/>
    <property type="project" value="MGI"/>
</dbReference>
<dbReference type="GO" id="GO:0007155">
    <property type="term" value="P:cell adhesion"/>
    <property type="evidence" value="ECO:0000314"/>
    <property type="project" value="MGI"/>
</dbReference>
<dbReference type="GO" id="GO:0006954">
    <property type="term" value="P:inflammatory response"/>
    <property type="evidence" value="ECO:0000315"/>
    <property type="project" value="MGI"/>
</dbReference>
<dbReference type="GO" id="GO:0050728">
    <property type="term" value="P:negative regulation of inflammatory response"/>
    <property type="evidence" value="ECO:0000315"/>
    <property type="project" value="MGI"/>
</dbReference>
<dbReference type="GO" id="GO:0060101">
    <property type="term" value="P:negative regulation of phagocytosis, engulfment"/>
    <property type="evidence" value="ECO:0000314"/>
    <property type="project" value="MGI"/>
</dbReference>
<dbReference type="GO" id="GO:0006911">
    <property type="term" value="P:phagocytosis, engulfment"/>
    <property type="evidence" value="ECO:0000315"/>
    <property type="project" value="MGI"/>
</dbReference>
<dbReference type="FunFam" id="2.60.40.10:FF:000912">
    <property type="entry name" value="Myeloid cell surface antigen CD33"/>
    <property type="match status" value="1"/>
</dbReference>
<dbReference type="FunFam" id="2.60.40.10:FF:000829">
    <property type="entry name" value="Sialic acid-binding Ig-like lectin 8"/>
    <property type="match status" value="1"/>
</dbReference>
<dbReference type="Gene3D" id="2.60.40.10">
    <property type="entry name" value="Immunoglobulins"/>
    <property type="match status" value="3"/>
</dbReference>
<dbReference type="InterPro" id="IPR007110">
    <property type="entry name" value="Ig-like_dom"/>
</dbReference>
<dbReference type="InterPro" id="IPR036179">
    <property type="entry name" value="Ig-like_dom_sf"/>
</dbReference>
<dbReference type="InterPro" id="IPR013783">
    <property type="entry name" value="Ig-like_fold"/>
</dbReference>
<dbReference type="InterPro" id="IPR003006">
    <property type="entry name" value="Ig/MHC_CS"/>
</dbReference>
<dbReference type="InterPro" id="IPR003599">
    <property type="entry name" value="Ig_sub"/>
</dbReference>
<dbReference type="InterPro" id="IPR003598">
    <property type="entry name" value="Ig_sub2"/>
</dbReference>
<dbReference type="InterPro" id="IPR013106">
    <property type="entry name" value="Ig_V-set"/>
</dbReference>
<dbReference type="InterPro" id="IPR051036">
    <property type="entry name" value="SIGLEC"/>
</dbReference>
<dbReference type="PANTHER" id="PTHR12035">
    <property type="entry name" value="SIALIC ACID BINDING IMMUNOGLOBULIN-LIKE LECTIN"/>
    <property type="match status" value="1"/>
</dbReference>
<dbReference type="PANTHER" id="PTHR12035:SF138">
    <property type="entry name" value="SIALIC ACID-BINDING IG-LIKE LECTIN 9"/>
    <property type="match status" value="1"/>
</dbReference>
<dbReference type="Pfam" id="PF13927">
    <property type="entry name" value="Ig_3"/>
    <property type="match status" value="1"/>
</dbReference>
<dbReference type="Pfam" id="PF07686">
    <property type="entry name" value="V-set"/>
    <property type="match status" value="1"/>
</dbReference>
<dbReference type="SMART" id="SM00409">
    <property type="entry name" value="IG"/>
    <property type="match status" value="3"/>
</dbReference>
<dbReference type="SMART" id="SM00408">
    <property type="entry name" value="IGc2"/>
    <property type="match status" value="1"/>
</dbReference>
<dbReference type="SUPFAM" id="SSF48726">
    <property type="entry name" value="Immunoglobulin"/>
    <property type="match status" value="3"/>
</dbReference>
<dbReference type="PROSITE" id="PS50835">
    <property type="entry name" value="IG_LIKE"/>
    <property type="match status" value="3"/>
</dbReference>
<dbReference type="PROSITE" id="PS00290">
    <property type="entry name" value="IG_MHC"/>
    <property type="match status" value="1"/>
</dbReference>
<name>SIG12_MOUSE</name>
<feature type="signal peptide" evidence="2">
    <location>
        <begin position="1"/>
        <end position="18"/>
    </location>
</feature>
<feature type="chain" id="PRO_0000014954" description="Sialic acid-binding Ig-like lectin 12">
    <location>
        <begin position="19"/>
        <end position="467"/>
    </location>
</feature>
<feature type="topological domain" description="Extracellular" evidence="2">
    <location>
        <begin position="19"/>
        <end position="353"/>
    </location>
</feature>
<feature type="transmembrane region" description="Helical" evidence="2">
    <location>
        <begin position="354"/>
        <end position="374"/>
    </location>
</feature>
<feature type="topological domain" description="Cytoplasmic" evidence="2">
    <location>
        <begin position="375"/>
        <end position="467"/>
    </location>
</feature>
<feature type="domain" description="Ig-like V-type">
    <location>
        <begin position="21"/>
        <end position="141"/>
    </location>
</feature>
<feature type="domain" description="Ig-like C2-type 1">
    <location>
        <begin position="152"/>
        <end position="239"/>
    </location>
</feature>
<feature type="domain" description="Ig-like C2-type 2">
    <location>
        <begin position="242"/>
        <end position="339"/>
    </location>
</feature>
<feature type="short sequence motif" description="ITIM motif">
    <location>
        <begin position="430"/>
        <end position="435"/>
    </location>
</feature>
<feature type="short sequence motif" description="SLAM-like motif">
    <location>
        <begin position="453"/>
        <end position="458"/>
    </location>
</feature>
<feature type="binding site" evidence="1">
    <location>
        <position position="126"/>
    </location>
    <ligand>
        <name>N-acetylneuraminate</name>
        <dbReference type="ChEBI" id="CHEBI:35418"/>
    </ligand>
</feature>
<feature type="modified residue" description="Phosphotyrosine" evidence="4">
    <location>
        <position position="432"/>
    </location>
</feature>
<feature type="modified residue" description="Phosphotyrosine" evidence="4">
    <location>
        <position position="455"/>
    </location>
</feature>
<feature type="glycosylation site" description="N-linked (GlcNAc...) asparagine" evidence="2">
    <location>
        <position position="46"/>
    </location>
</feature>
<feature type="glycosylation site" description="N-linked (GlcNAc...) asparagine" evidence="2">
    <location>
        <position position="167"/>
    </location>
</feature>
<feature type="glycosylation site" description="N-linked (GlcNAc...) asparagine" evidence="2">
    <location>
        <position position="197"/>
    </location>
</feature>
<feature type="glycosylation site" description="N-linked (GlcNAc...) asparagine" evidence="2">
    <location>
        <position position="216"/>
    </location>
</feature>
<feature type="glycosylation site" description="N-linked (GlcNAc...) asparagine" evidence="2">
    <location>
        <position position="227"/>
    </location>
</feature>
<feature type="glycosylation site" description="N-linked (GlcNAc...) asparagine" evidence="2">
    <location>
        <position position="237"/>
    </location>
</feature>
<feature type="glycosylation site" description="N-linked (GlcNAc...) asparagine" evidence="2">
    <location>
        <position position="244"/>
    </location>
</feature>
<feature type="glycosylation site" description="N-linked (GlcNAc...) asparagine" evidence="2">
    <location>
        <position position="262"/>
    </location>
</feature>
<feature type="glycosylation site" description="N-linked (GlcNAc...) asparagine" evidence="2">
    <location>
        <position position="287"/>
    </location>
</feature>
<feature type="glycosylation site" description="N-linked (GlcNAc...) asparagine" evidence="2">
    <location>
        <position position="294"/>
    </location>
</feature>
<feature type="disulfide bond" evidence="3">
    <location>
        <begin position="40"/>
        <end position="176"/>
    </location>
</feature>
<feature type="disulfide bond" evidence="3">
    <location>
        <begin position="45"/>
        <end position="108"/>
    </location>
</feature>
<feature type="disulfide bond" evidence="3">
    <location>
        <begin position="170"/>
        <end position="219"/>
    </location>
</feature>
<feature type="disulfide bond" evidence="3">
    <location>
        <begin position="278"/>
        <end position="323"/>
    </location>
</feature>
<feature type="mutagenesis site" description="Abolishes binding to PTPN6 and PTPN11." evidence="4 5">
    <original>Y</original>
    <variation>F</variation>
    <location>
        <position position="432"/>
    </location>
</feature>
<feature type="mutagenesis site" description="Reduces binding to PTPN6." evidence="4 5">
    <original>Y</original>
    <variation>F</variation>
    <location>
        <position position="455"/>
    </location>
</feature>
<feature type="sequence conflict" description="In Ref. 2; AAK49917." evidence="6" ref="2">
    <original>L</original>
    <variation>M</variation>
    <location>
        <position position="2"/>
    </location>
</feature>
<feature type="sequence conflict" description="In Ref. 2; AAK49917." evidence="6" ref="2">
    <original>V</original>
    <variation>G</variation>
    <location>
        <position position="24"/>
    </location>
</feature>
<feature type="sequence conflict" description="In Ref. 2; AAK49917." evidence="6" ref="2">
    <original>D</original>
    <variation>E</variation>
    <location>
        <position position="102"/>
    </location>
</feature>
<feature type="sequence conflict" description="In Ref. 1; AAG38598." evidence="6" ref="1">
    <original>I</original>
    <variation>T</variation>
    <location>
        <position position="234"/>
    </location>
</feature>
<evidence type="ECO:0000250" key="1"/>
<evidence type="ECO:0000255" key="2"/>
<evidence type="ECO:0000255" key="3">
    <source>
        <dbReference type="PROSITE-ProRule" id="PRU00114"/>
    </source>
</evidence>
<evidence type="ECO:0000269" key="4">
    <source>
    </source>
</evidence>
<evidence type="ECO:0000269" key="5">
    <source>
    </source>
</evidence>
<evidence type="ECO:0000305" key="6"/>
<accession>Q91Y57</accession>
<accession>E9QMD1</accession>
<proteinExistence type="evidence at protein level"/>
<gene>
    <name type="primary">Siglec12</name>
    <name type="synonym">Siglec5</name>
    <name type="synonym">Siglece</name>
    <name type="synonym">Siglecl1</name>
</gene>
<reference key="1">
    <citation type="journal article" date="2001" name="Biochem. J.">
        <title>mSiglec-E, a novel mouse CD33-related siglec (sialic acid-binding immunoglobulin-like lectin) that recruits Src homology 2 (SH2)-domain-containing protein tyrosine phosphatases SHP-1 and SHP-2.</title>
        <authorList>
            <person name="Yu Z."/>
            <person name="Maoui M."/>
            <person name="Wu L."/>
            <person name="Banville D."/>
            <person name="Shen S.H."/>
        </authorList>
    </citation>
    <scope>NUCLEOTIDE SEQUENCE [MRNA]</scope>
    <scope>PHOSPHORYLATION AT TYR-432 AND TYR-455</scope>
    <scope>MUTAGENESIS OF TYR-432 AND TYR-455</scope>
    <scope>INTERACTION WITH PTPN6 AND PTPN11</scope>
</reference>
<reference key="2">
    <citation type="journal article" date="2001" name="J. Biol. Chem.">
        <title>Molecular cloning of MIS, a myeloid inhibitory siglec, that binds protein tyrosine phosphatases SHP-1 and SHP-2.</title>
        <authorList>
            <person name="Ulyanova T."/>
            <person name="Shah D.D."/>
            <person name="Thomas M.L."/>
        </authorList>
    </citation>
    <scope>NUCLEOTIDE SEQUENCE [MRNA]</scope>
    <scope>PHOSPHORYLATION</scope>
    <scope>MUTAGENESIS OF TYR-432 AND TYR-455</scope>
    <scope>INTERACTION WITH PTPN6 AND PTPN11</scope>
    <source>
        <strain>C57BL/6J</strain>
        <tissue>Bone marrow</tissue>
    </source>
</reference>
<reference key="3">
    <citation type="journal article" date="2009" name="PLoS Biol.">
        <title>Lineage-specific biology revealed by a finished genome assembly of the mouse.</title>
        <authorList>
            <person name="Church D.M."/>
            <person name="Goodstadt L."/>
            <person name="Hillier L.W."/>
            <person name="Zody M.C."/>
            <person name="Goldstein S."/>
            <person name="She X."/>
            <person name="Bult C.J."/>
            <person name="Agarwala R."/>
            <person name="Cherry J.L."/>
            <person name="DiCuccio M."/>
            <person name="Hlavina W."/>
            <person name="Kapustin Y."/>
            <person name="Meric P."/>
            <person name="Maglott D."/>
            <person name="Birtle Z."/>
            <person name="Marques A.C."/>
            <person name="Graves T."/>
            <person name="Zhou S."/>
            <person name="Teague B."/>
            <person name="Potamousis K."/>
            <person name="Churas C."/>
            <person name="Place M."/>
            <person name="Herschleb J."/>
            <person name="Runnheim R."/>
            <person name="Forrest D."/>
            <person name="Amos-Landgraf J."/>
            <person name="Schwartz D.C."/>
            <person name="Cheng Z."/>
            <person name="Lindblad-Toh K."/>
            <person name="Eichler E.E."/>
            <person name="Ponting C.P."/>
        </authorList>
    </citation>
    <scope>NUCLEOTIDE SEQUENCE [LARGE SCALE GENOMIC DNA]</scope>
    <source>
        <strain>C57BL/6J</strain>
    </source>
</reference>